<name>Y5620_SACEN</name>
<accession>A4FL81</accession>
<sequence>MLVILRSVVLFVLAAVAEIGGAWLVWQGVREQRGLLWIGAGVIALGIYGFVATFQPDPNFGRILAAYGGVFVAGSLLWGVVVDGFRPDRWDLIGATICLAGVAVIMYAPR</sequence>
<comment type="subcellular location">
    <subcellularLocation>
        <location evidence="1">Cell membrane</location>
        <topology evidence="1">Multi-pass membrane protein</topology>
    </subcellularLocation>
</comment>
<comment type="similarity">
    <text evidence="1">Belongs to the UPF0060 family.</text>
</comment>
<evidence type="ECO:0000255" key="1">
    <source>
        <dbReference type="HAMAP-Rule" id="MF_00010"/>
    </source>
</evidence>
<proteinExistence type="inferred from homology"/>
<protein>
    <recommendedName>
        <fullName evidence="1">UPF0060 membrane protein SACE_5620</fullName>
    </recommendedName>
</protein>
<dbReference type="EMBL" id="AM420293">
    <property type="protein sequence ID" value="CAM04806.1"/>
    <property type="molecule type" value="Genomic_DNA"/>
</dbReference>
<dbReference type="RefSeq" id="WP_009944603.1">
    <property type="nucleotide sequence ID" value="NC_009142.1"/>
</dbReference>
<dbReference type="SMR" id="A4FL81"/>
<dbReference type="KEGG" id="sen:SACE_5620"/>
<dbReference type="eggNOG" id="COG1742">
    <property type="taxonomic scope" value="Bacteria"/>
</dbReference>
<dbReference type="HOGENOM" id="CLU_117653_0_1_11"/>
<dbReference type="Proteomes" id="UP000006728">
    <property type="component" value="Chromosome"/>
</dbReference>
<dbReference type="GO" id="GO:0005886">
    <property type="term" value="C:plasma membrane"/>
    <property type="evidence" value="ECO:0007669"/>
    <property type="project" value="UniProtKB-SubCell"/>
</dbReference>
<dbReference type="HAMAP" id="MF_00010">
    <property type="entry name" value="UPF0060"/>
    <property type="match status" value="1"/>
</dbReference>
<dbReference type="InterPro" id="IPR003844">
    <property type="entry name" value="UPF0060"/>
</dbReference>
<dbReference type="NCBIfam" id="NF002586">
    <property type="entry name" value="PRK02237.1"/>
    <property type="match status" value="1"/>
</dbReference>
<dbReference type="PANTHER" id="PTHR36116">
    <property type="entry name" value="UPF0060 MEMBRANE PROTEIN YNFA"/>
    <property type="match status" value="1"/>
</dbReference>
<dbReference type="PANTHER" id="PTHR36116:SF1">
    <property type="entry name" value="UPF0060 MEMBRANE PROTEIN YNFA"/>
    <property type="match status" value="1"/>
</dbReference>
<dbReference type="Pfam" id="PF02694">
    <property type="entry name" value="UPF0060"/>
    <property type="match status" value="1"/>
</dbReference>
<dbReference type="SUPFAM" id="SSF103481">
    <property type="entry name" value="Multidrug resistance efflux transporter EmrE"/>
    <property type="match status" value="1"/>
</dbReference>
<reference key="1">
    <citation type="journal article" date="2007" name="Nat. Biotechnol.">
        <title>Complete genome sequence of the erythromycin-producing bacterium Saccharopolyspora erythraea NRRL23338.</title>
        <authorList>
            <person name="Oliynyk M."/>
            <person name="Samborskyy M."/>
            <person name="Lester J.B."/>
            <person name="Mironenko T."/>
            <person name="Scott N."/>
            <person name="Dickens S."/>
            <person name="Haydock S.F."/>
            <person name="Leadlay P.F."/>
        </authorList>
    </citation>
    <scope>NUCLEOTIDE SEQUENCE [LARGE SCALE GENOMIC DNA]</scope>
    <source>
        <strain>ATCC 11635 / DSM 40517 / JCM 4748 / NBRC 13426 / NCIMB 8594 / NRRL 2338</strain>
    </source>
</reference>
<keyword id="KW-1003">Cell membrane</keyword>
<keyword id="KW-0472">Membrane</keyword>
<keyword id="KW-1185">Reference proteome</keyword>
<keyword id="KW-0812">Transmembrane</keyword>
<keyword id="KW-1133">Transmembrane helix</keyword>
<gene>
    <name type="ordered locus">SACE_5620</name>
</gene>
<organism>
    <name type="scientific">Saccharopolyspora erythraea (strain ATCC 11635 / DSM 40517 / JCM 4748 / NBRC 13426 / NCIMB 8594 / NRRL 2338)</name>
    <dbReference type="NCBI Taxonomy" id="405948"/>
    <lineage>
        <taxon>Bacteria</taxon>
        <taxon>Bacillati</taxon>
        <taxon>Actinomycetota</taxon>
        <taxon>Actinomycetes</taxon>
        <taxon>Pseudonocardiales</taxon>
        <taxon>Pseudonocardiaceae</taxon>
        <taxon>Saccharopolyspora</taxon>
    </lineage>
</organism>
<feature type="chain" id="PRO_0000321585" description="UPF0060 membrane protein SACE_5620">
    <location>
        <begin position="1"/>
        <end position="110"/>
    </location>
</feature>
<feature type="transmembrane region" description="Helical" evidence="1">
    <location>
        <begin position="8"/>
        <end position="28"/>
    </location>
</feature>
<feature type="transmembrane region" description="Helical" evidence="1">
    <location>
        <begin position="34"/>
        <end position="54"/>
    </location>
</feature>
<feature type="transmembrane region" description="Helical" evidence="1">
    <location>
        <begin position="63"/>
        <end position="83"/>
    </location>
</feature>
<feature type="transmembrane region" description="Helical" evidence="1">
    <location>
        <begin position="89"/>
        <end position="109"/>
    </location>
</feature>